<dbReference type="SMR" id="P0DL30"/>
<dbReference type="GO" id="GO:0005576">
    <property type="term" value="C:extracellular region"/>
    <property type="evidence" value="ECO:0007669"/>
    <property type="project" value="UniProtKB-SubCell"/>
</dbReference>
<dbReference type="GO" id="GO:0030246">
    <property type="term" value="F:carbohydrate binding"/>
    <property type="evidence" value="ECO:0007669"/>
    <property type="project" value="UniProtKB-KW"/>
</dbReference>
<dbReference type="GO" id="GO:0046872">
    <property type="term" value="F:metal ion binding"/>
    <property type="evidence" value="ECO:0007669"/>
    <property type="project" value="UniProtKB-KW"/>
</dbReference>
<dbReference type="CDD" id="cd03594">
    <property type="entry name" value="CLECT_REG-1_like"/>
    <property type="match status" value="1"/>
</dbReference>
<dbReference type="FunFam" id="3.10.100.10:FF:000015">
    <property type="entry name" value="C-type lectin Cal"/>
    <property type="match status" value="1"/>
</dbReference>
<dbReference type="Gene3D" id="3.10.100.10">
    <property type="entry name" value="Mannose-Binding Protein A, subunit A"/>
    <property type="match status" value="1"/>
</dbReference>
<dbReference type="InterPro" id="IPR001304">
    <property type="entry name" value="C-type_lectin-like"/>
</dbReference>
<dbReference type="InterPro" id="IPR016186">
    <property type="entry name" value="C-type_lectin-like/link_sf"/>
</dbReference>
<dbReference type="InterPro" id="IPR050111">
    <property type="entry name" value="C-type_lectin/snaclec_domain"/>
</dbReference>
<dbReference type="InterPro" id="IPR018378">
    <property type="entry name" value="C-type_lectin_CS"/>
</dbReference>
<dbReference type="InterPro" id="IPR016187">
    <property type="entry name" value="CTDL_fold"/>
</dbReference>
<dbReference type="PANTHER" id="PTHR22803">
    <property type="entry name" value="MANNOSE, PHOSPHOLIPASE, LECTIN RECEPTOR RELATED"/>
    <property type="match status" value="1"/>
</dbReference>
<dbReference type="Pfam" id="PF00059">
    <property type="entry name" value="Lectin_C"/>
    <property type="match status" value="1"/>
</dbReference>
<dbReference type="PRINTS" id="PR01504">
    <property type="entry name" value="PNCREATITSAP"/>
</dbReference>
<dbReference type="SMART" id="SM00034">
    <property type="entry name" value="CLECT"/>
    <property type="match status" value="1"/>
</dbReference>
<dbReference type="SUPFAM" id="SSF56436">
    <property type="entry name" value="C-type lectin-like"/>
    <property type="match status" value="1"/>
</dbReference>
<dbReference type="PROSITE" id="PS00615">
    <property type="entry name" value="C_TYPE_LECTIN_1"/>
    <property type="match status" value="1"/>
</dbReference>
<dbReference type="PROSITE" id="PS50041">
    <property type="entry name" value="C_TYPE_LECTIN_2"/>
    <property type="match status" value="1"/>
</dbReference>
<protein>
    <recommendedName>
        <fullName>C-type lectin BPL</fullName>
        <shortName>CTL</shortName>
    </recommendedName>
    <alternativeName>
        <fullName>Galactose-specific lectin</fullName>
    </alternativeName>
</protein>
<organism>
    <name type="scientific">Bothrops pirajai</name>
    <name type="common">Piraja's lancehead</name>
    <dbReference type="NCBI Taxonomy" id="113192"/>
    <lineage>
        <taxon>Eukaryota</taxon>
        <taxon>Metazoa</taxon>
        <taxon>Chordata</taxon>
        <taxon>Craniata</taxon>
        <taxon>Vertebrata</taxon>
        <taxon>Euteleostomi</taxon>
        <taxon>Lepidosauria</taxon>
        <taxon>Squamata</taxon>
        <taxon>Bifurcata</taxon>
        <taxon>Unidentata</taxon>
        <taxon>Episquamata</taxon>
        <taxon>Toxicofera</taxon>
        <taxon>Serpentes</taxon>
        <taxon>Colubroidea</taxon>
        <taxon>Viperidae</taxon>
        <taxon>Crotalinae</taxon>
        <taxon>Bothrops</taxon>
    </lineage>
</organism>
<proteinExistence type="evidence at protein level"/>
<name>LECG_BOTPI</name>
<feature type="chain" id="PRO_0000422308" description="C-type lectin BPL">
    <location>
        <begin position="1"/>
        <end position="135"/>
    </location>
</feature>
<feature type="domain" description="C-type lectin" evidence="2">
    <location>
        <begin position="10"/>
        <end position="132"/>
    </location>
</feature>
<feature type="short sequence motif" description="Galactose-binding">
    <location>
        <begin position="96"/>
        <end position="98"/>
    </location>
</feature>
<feature type="binding site" evidence="1">
    <location>
        <position position="96"/>
    </location>
    <ligand>
        <name>Ca(2+)</name>
        <dbReference type="ChEBI" id="CHEBI:29108"/>
    </ligand>
</feature>
<feature type="binding site" evidence="1">
    <location>
        <position position="98"/>
    </location>
    <ligand>
        <name>Ca(2+)</name>
        <dbReference type="ChEBI" id="CHEBI:29108"/>
    </ligand>
</feature>
<feature type="binding site" evidence="1">
    <location>
        <position position="104"/>
    </location>
    <ligand>
        <name>Ca(2+)</name>
        <dbReference type="ChEBI" id="CHEBI:29108"/>
    </ligand>
</feature>
<feature type="binding site" evidence="1">
    <location>
        <position position="120"/>
    </location>
    <ligand>
        <name>Ca(2+)</name>
        <dbReference type="ChEBI" id="CHEBI:29108"/>
    </ligand>
</feature>
<feature type="disulfide bond" evidence="2">
    <location>
        <begin position="3"/>
        <end position="14"/>
    </location>
</feature>
<feature type="disulfide bond" evidence="2">
    <location>
        <begin position="31"/>
        <end position="131"/>
    </location>
</feature>
<feature type="disulfide bond" evidence="2">
    <location>
        <begin position="38"/>
        <end position="133"/>
    </location>
</feature>
<feature type="disulfide bond" description="Interchain" evidence="2">
    <location>
        <position position="86"/>
    </location>
</feature>
<feature type="disulfide bond" evidence="2">
    <location>
        <begin position="106"/>
        <end position="123"/>
    </location>
</feature>
<keyword id="KW-0106">Calcium</keyword>
<keyword id="KW-0903">Direct protein sequencing</keyword>
<keyword id="KW-1015">Disulfide bond</keyword>
<keyword id="KW-0348">Hemagglutinin</keyword>
<keyword id="KW-0430">Lectin</keyword>
<keyword id="KW-0479">Metal-binding</keyword>
<keyword id="KW-0964">Secreted</keyword>
<evidence type="ECO:0000250" key="1"/>
<evidence type="ECO:0000255" key="2">
    <source>
        <dbReference type="PROSITE-ProRule" id="PRU00040"/>
    </source>
</evidence>
<evidence type="ECO:0000269" key="3">
    <source>
    </source>
</evidence>
<evidence type="ECO:0000305" key="4"/>
<evidence type="ECO:0000305" key="5">
    <source>
    </source>
</evidence>
<comment type="function">
    <text evidence="3">Galactose-binding protein which recognizes specific carbohydrate structures and agglutinates a variety of animal cells by binding to cell-surface glycoproteins and glycolipids. Calcium-dependent lectin. Shows high hemagglutinating activity in the presence of human erythrocytes, which are agglutinated with a minimum hemagglutination concentration (MHC) of 2.5-0.35 ug/ml. Causes indirect nephrotoxicity. Causes reductions in perfusion pressures, renal vascular resistance, urinary flow, glomerular filtration rate, sodium, potassium and chloride tubular transport. Its effects may be caused by the release of inflammatory mediators.</text>
</comment>
<comment type="subunit">
    <text evidence="1">Homodimer; disulfide-linked.</text>
</comment>
<comment type="subcellular location">
    <subcellularLocation>
        <location>Secreted</location>
    </subcellularLocation>
</comment>
<comment type="tissue specificity">
    <text>Expressed by the venom gland.</text>
</comment>
<comment type="induction">
    <text evidence="3">Hemagglutination activity is inhibited by D-lactose (MIC=1.75 mM), D-galactose (MIC=0.75 mM) and D-raphinose (MIC=3.5 mM). Is not inhibited by D-glucose, D-sucrose, D-maltose, D-mannose, D-fructose, D-threalose, and methyl-manopyrosonide (PubMed:15381156).</text>
</comment>
<comment type="miscellaneous">
    <text evidence="5">Negative results: does not induce direct vasoactive effects in perfused arteriolar mesenteric bed, and does not potentiate bradykinin contraction in the ileum.</text>
</comment>
<comment type="similarity">
    <text evidence="4">Belongs to the true venom lectin family.</text>
</comment>
<comment type="caution">
    <text evidence="4">The same name has been given to a lectin from Bothropoides pauloensis (AC P86970).</text>
</comment>
<reference key="1">
    <citation type="journal article" date="2005" name="Int. J. Biochem. Cell Biol.">
        <title>A new C-type animal lectin isolated from Bothrops pirajai is responsible for the snake venom major effects in the isolated kidney.</title>
        <authorList>
            <person name="Havt A."/>
            <person name="Toyama M.H."/>
            <person name="do Nascimento N.R."/>
            <person name="Toyama D.O."/>
            <person name="Nobre A.C."/>
            <person name="Martins A.M."/>
            <person name="Barbosa P.S."/>
            <person name="Novello J.C."/>
            <person name="Boschero A.C."/>
            <person name="Carneiro E.M."/>
            <person name="Fonteles M.C."/>
            <person name="Monteiro H.S."/>
        </authorList>
    </citation>
    <scope>PROTEIN SEQUENCE</scope>
    <scope>FUNCTION</scope>
    <scope>BIOASSAY</scope>
    <scope>INDUCTION</scope>
    <source>
        <tissue>Venom</tissue>
    </source>
</reference>
<sequence length="135" mass="16117">NNCPGDWLPMNGLCYKIFNELKAWEDAEMFCRKYKPGCHLASIHIYGESLEIAEYISDYHKGQAEVWIGLWDKKKDFSWEWTDRSCTDYLSWDKNQPDHYENKEFCVELVSLTGYRLWEDQVCESKNAFLCQCKF</sequence>
<accession>P0DL30</accession>